<dbReference type="EC" id="2.3.3.10" evidence="7"/>
<dbReference type="EMBL" id="U32187">
    <property type="protein sequence ID" value="AAB17601.1"/>
    <property type="molecule type" value="Genomic_DNA"/>
</dbReference>
<dbReference type="EMBL" id="CU329670">
    <property type="protein sequence ID" value="CAB11060.1"/>
    <property type="molecule type" value="Genomic_DNA"/>
</dbReference>
<dbReference type="PIR" id="S61875">
    <property type="entry name" value="S61875"/>
</dbReference>
<dbReference type="RefSeq" id="NP_593859.1">
    <property type="nucleotide sequence ID" value="NM_001019288.2"/>
</dbReference>
<dbReference type="SMR" id="P54874"/>
<dbReference type="FunCoup" id="P54874">
    <property type="interactions" value="261"/>
</dbReference>
<dbReference type="STRING" id="284812.P54874"/>
<dbReference type="iPTMnet" id="P54874"/>
<dbReference type="PaxDb" id="4896-SPAC4F8.14c.1"/>
<dbReference type="EnsemblFungi" id="SPAC4F8.14c.1">
    <property type="protein sequence ID" value="SPAC4F8.14c.1:pep"/>
    <property type="gene ID" value="SPAC4F8.14c"/>
</dbReference>
<dbReference type="PomBase" id="SPAC4F8.14c">
    <property type="gene designation" value="hcs1"/>
</dbReference>
<dbReference type="VEuPathDB" id="FungiDB:SPAC4F8.14c"/>
<dbReference type="eggNOG" id="KOG1393">
    <property type="taxonomic scope" value="Eukaryota"/>
</dbReference>
<dbReference type="HOGENOM" id="CLU_008065_0_1_1"/>
<dbReference type="InParanoid" id="P54874"/>
<dbReference type="OMA" id="DDAYNWI"/>
<dbReference type="PhylomeDB" id="P54874"/>
<dbReference type="BRENDA" id="2.3.3.10">
    <property type="organism ID" value="5613"/>
</dbReference>
<dbReference type="Reactome" id="R-SPO-191273">
    <property type="pathway name" value="Cholesterol biosynthesis"/>
</dbReference>
<dbReference type="Reactome" id="R-SPO-77111">
    <property type="pathway name" value="Synthesis of Ketone Bodies"/>
</dbReference>
<dbReference type="Reactome" id="R-SPO-9837999">
    <property type="pathway name" value="Mitochondrial protein degradation"/>
</dbReference>
<dbReference type="UniPathway" id="UPA00058">
    <property type="reaction ID" value="UER00102"/>
</dbReference>
<dbReference type="PRO" id="PR:P54874"/>
<dbReference type="Proteomes" id="UP000002485">
    <property type="component" value="Chromosome I"/>
</dbReference>
<dbReference type="GO" id="GO:0005829">
    <property type="term" value="C:cytosol"/>
    <property type="evidence" value="ECO:0007005"/>
    <property type="project" value="PomBase"/>
</dbReference>
<dbReference type="GO" id="GO:0005783">
    <property type="term" value="C:endoplasmic reticulum"/>
    <property type="evidence" value="ECO:0000305"/>
    <property type="project" value="PomBase"/>
</dbReference>
<dbReference type="GO" id="GO:0005634">
    <property type="term" value="C:nucleus"/>
    <property type="evidence" value="ECO:0007005"/>
    <property type="project" value="PomBase"/>
</dbReference>
<dbReference type="GO" id="GO:0004421">
    <property type="term" value="F:hydroxymethylglutaryl-CoA synthase activity"/>
    <property type="evidence" value="ECO:0000315"/>
    <property type="project" value="PomBase"/>
</dbReference>
<dbReference type="GO" id="GO:0006084">
    <property type="term" value="P:acetyl-CoA metabolic process"/>
    <property type="evidence" value="ECO:0000315"/>
    <property type="project" value="PomBase"/>
</dbReference>
<dbReference type="GO" id="GO:0006696">
    <property type="term" value="P:ergosterol biosynthetic process"/>
    <property type="evidence" value="ECO:0000318"/>
    <property type="project" value="GO_Central"/>
</dbReference>
<dbReference type="GO" id="GO:0010142">
    <property type="term" value="P:farnesyl diphosphate biosynthetic process, mevalonate pathway"/>
    <property type="evidence" value="ECO:0000315"/>
    <property type="project" value="PomBase"/>
</dbReference>
<dbReference type="CDD" id="cd00827">
    <property type="entry name" value="init_cond_enzymes"/>
    <property type="match status" value="1"/>
</dbReference>
<dbReference type="FunFam" id="3.40.47.10:FF:000008">
    <property type="entry name" value="3-hydroxy-3-methylglutaryl coenzyme A synthase"/>
    <property type="match status" value="1"/>
</dbReference>
<dbReference type="Gene3D" id="3.40.47.10">
    <property type="match status" value="1"/>
</dbReference>
<dbReference type="InterPro" id="IPR000590">
    <property type="entry name" value="HMG_CoA_synt_AS"/>
</dbReference>
<dbReference type="InterPro" id="IPR013746">
    <property type="entry name" value="HMG_CoA_synt_C_dom"/>
</dbReference>
<dbReference type="InterPro" id="IPR013528">
    <property type="entry name" value="HMG_CoA_synth_N"/>
</dbReference>
<dbReference type="InterPro" id="IPR010122">
    <property type="entry name" value="HMG_CoA_synthase_euk"/>
</dbReference>
<dbReference type="InterPro" id="IPR016039">
    <property type="entry name" value="Thiolase-like"/>
</dbReference>
<dbReference type="NCBIfam" id="TIGR01833">
    <property type="entry name" value="HMG-CoA-S_euk"/>
    <property type="match status" value="1"/>
</dbReference>
<dbReference type="PANTHER" id="PTHR43323">
    <property type="entry name" value="3-HYDROXY-3-METHYLGLUTARYL COENZYME A SYNTHASE"/>
    <property type="match status" value="1"/>
</dbReference>
<dbReference type="PANTHER" id="PTHR43323:SF2">
    <property type="entry name" value="HYDROXYMETHYLGLUTARYL-COA SYNTHASE"/>
    <property type="match status" value="1"/>
</dbReference>
<dbReference type="Pfam" id="PF08540">
    <property type="entry name" value="HMG_CoA_synt_C"/>
    <property type="match status" value="1"/>
</dbReference>
<dbReference type="Pfam" id="PF01154">
    <property type="entry name" value="HMG_CoA_synt_N"/>
    <property type="match status" value="1"/>
</dbReference>
<dbReference type="SUPFAM" id="SSF53901">
    <property type="entry name" value="Thiolase-like"/>
    <property type="match status" value="2"/>
</dbReference>
<dbReference type="PROSITE" id="PS01226">
    <property type="entry name" value="HMG_COA_SYNTHASE"/>
    <property type="match status" value="1"/>
</dbReference>
<keyword id="KW-0444">Lipid biosynthesis</keyword>
<keyword id="KW-0443">Lipid metabolism</keyword>
<keyword id="KW-0597">Phosphoprotein</keyword>
<keyword id="KW-1185">Reference proteome</keyword>
<keyword id="KW-0752">Steroid biosynthesis</keyword>
<keyword id="KW-0753">Steroid metabolism</keyword>
<keyword id="KW-0756">Sterol biosynthesis</keyword>
<keyword id="KW-1207">Sterol metabolism</keyword>
<keyword id="KW-0808">Transferase</keyword>
<accession>P54874</accession>
<reference key="1">
    <citation type="journal article" date="1995" name="Yeast">
        <title>Molecular cloning and sequencing of the hcs gene, which encodes 3-hydroxy-3-methylglutaryl coenzyme A synthase of Schizosaccharomyces pombe.</title>
        <authorList>
            <person name="Katayama S."/>
            <person name="Adachi N."/>
            <person name="Takao K."/>
            <person name="Nakagawa T."/>
            <person name="Matsuda H."/>
            <person name="Kawamukai M."/>
        </authorList>
    </citation>
    <scope>NUCLEOTIDE SEQUENCE [GENOMIC DNA]</scope>
    <scope>FUNCTION</scope>
    <scope>DISRUPTION PHENOTYPE</scope>
    <scope>PATHWAY</scope>
</reference>
<reference key="2">
    <citation type="journal article" date="2002" name="Nature">
        <title>The genome sequence of Schizosaccharomyces pombe.</title>
        <authorList>
            <person name="Wood V."/>
            <person name="Gwilliam R."/>
            <person name="Rajandream M.A."/>
            <person name="Lyne M.H."/>
            <person name="Lyne R."/>
            <person name="Stewart A."/>
            <person name="Sgouros J.G."/>
            <person name="Peat N."/>
            <person name="Hayles J."/>
            <person name="Baker S.G."/>
            <person name="Basham D."/>
            <person name="Bowman S."/>
            <person name="Brooks K."/>
            <person name="Brown D."/>
            <person name="Brown S."/>
            <person name="Chillingworth T."/>
            <person name="Churcher C.M."/>
            <person name="Collins M."/>
            <person name="Connor R."/>
            <person name="Cronin A."/>
            <person name="Davis P."/>
            <person name="Feltwell T."/>
            <person name="Fraser A."/>
            <person name="Gentles S."/>
            <person name="Goble A."/>
            <person name="Hamlin N."/>
            <person name="Harris D.E."/>
            <person name="Hidalgo J."/>
            <person name="Hodgson G."/>
            <person name="Holroyd S."/>
            <person name="Hornsby T."/>
            <person name="Howarth S."/>
            <person name="Huckle E.J."/>
            <person name="Hunt S."/>
            <person name="Jagels K."/>
            <person name="James K.D."/>
            <person name="Jones L."/>
            <person name="Jones M."/>
            <person name="Leather S."/>
            <person name="McDonald S."/>
            <person name="McLean J."/>
            <person name="Mooney P."/>
            <person name="Moule S."/>
            <person name="Mungall K.L."/>
            <person name="Murphy L.D."/>
            <person name="Niblett D."/>
            <person name="Odell C."/>
            <person name="Oliver K."/>
            <person name="O'Neil S."/>
            <person name="Pearson D."/>
            <person name="Quail M.A."/>
            <person name="Rabbinowitsch E."/>
            <person name="Rutherford K.M."/>
            <person name="Rutter S."/>
            <person name="Saunders D."/>
            <person name="Seeger K."/>
            <person name="Sharp S."/>
            <person name="Skelton J."/>
            <person name="Simmonds M.N."/>
            <person name="Squares R."/>
            <person name="Squares S."/>
            <person name="Stevens K."/>
            <person name="Taylor K."/>
            <person name="Taylor R.G."/>
            <person name="Tivey A."/>
            <person name="Walsh S.V."/>
            <person name="Warren T."/>
            <person name="Whitehead S."/>
            <person name="Woodward J.R."/>
            <person name="Volckaert G."/>
            <person name="Aert R."/>
            <person name="Robben J."/>
            <person name="Grymonprez B."/>
            <person name="Weltjens I."/>
            <person name="Vanstreels E."/>
            <person name="Rieger M."/>
            <person name="Schaefer M."/>
            <person name="Mueller-Auer S."/>
            <person name="Gabel C."/>
            <person name="Fuchs M."/>
            <person name="Duesterhoeft A."/>
            <person name="Fritzc C."/>
            <person name="Holzer E."/>
            <person name="Moestl D."/>
            <person name="Hilbert H."/>
            <person name="Borzym K."/>
            <person name="Langer I."/>
            <person name="Beck A."/>
            <person name="Lehrach H."/>
            <person name="Reinhardt R."/>
            <person name="Pohl T.M."/>
            <person name="Eger P."/>
            <person name="Zimmermann W."/>
            <person name="Wedler H."/>
            <person name="Wambutt R."/>
            <person name="Purnelle B."/>
            <person name="Goffeau A."/>
            <person name="Cadieu E."/>
            <person name="Dreano S."/>
            <person name="Gloux S."/>
            <person name="Lelaure V."/>
            <person name="Mottier S."/>
            <person name="Galibert F."/>
            <person name="Aves S.J."/>
            <person name="Xiang Z."/>
            <person name="Hunt C."/>
            <person name="Moore K."/>
            <person name="Hurst S.M."/>
            <person name="Lucas M."/>
            <person name="Rochet M."/>
            <person name="Gaillardin C."/>
            <person name="Tallada V.A."/>
            <person name="Garzon A."/>
            <person name="Thode G."/>
            <person name="Daga R.R."/>
            <person name="Cruzado L."/>
            <person name="Jimenez J."/>
            <person name="Sanchez M."/>
            <person name="del Rey F."/>
            <person name="Benito J."/>
            <person name="Dominguez A."/>
            <person name="Revuelta J.L."/>
            <person name="Moreno S."/>
            <person name="Armstrong J."/>
            <person name="Forsburg S.L."/>
            <person name="Cerutti L."/>
            <person name="Lowe T."/>
            <person name="McCombie W.R."/>
            <person name="Paulsen I."/>
            <person name="Potashkin J."/>
            <person name="Shpakovski G.V."/>
            <person name="Ussery D."/>
            <person name="Barrell B.G."/>
            <person name="Nurse P."/>
        </authorList>
    </citation>
    <scope>NUCLEOTIDE SEQUENCE [LARGE SCALE GENOMIC DNA]</scope>
    <source>
        <strain>972 / ATCC 24843</strain>
    </source>
</reference>
<reference key="3">
    <citation type="journal article" date="1996" name="Yeast">
        <title>Molecular, functional and evolutionary characterization of the gene encoding HMG-CoA reductase in the fission yeast, Schizosaccharomyces pombe.</title>
        <authorList>
            <person name="Lum P.Y."/>
            <person name="Edwards S."/>
            <person name="Wright R."/>
        </authorList>
    </citation>
    <scope>FUNCTION</scope>
</reference>
<reference key="4">
    <citation type="journal article" date="2008" name="J. Proteome Res.">
        <title>Phosphoproteome analysis of fission yeast.</title>
        <authorList>
            <person name="Wilson-Grady J.T."/>
            <person name="Villen J."/>
            <person name="Gygi S.P."/>
        </authorList>
    </citation>
    <scope>PHOSPHORYLATION [LARGE SCALE ANALYSIS] AT THR-398</scope>
    <scope>IDENTIFICATION BY MASS SPECTROMETRY</scope>
</reference>
<reference key="5">
    <citation type="journal article" date="2009" name="Genes Cells">
        <title>Pleiotropic phenotypes caused by an opal nonsense mutation in an essential gene encoding HMG-CoA reductase in fission yeast.</title>
        <authorList>
            <person name="Fang Y."/>
            <person name="Imagawa K."/>
            <person name="Zhou X."/>
            <person name="Kita A."/>
            <person name="Sugiura R."/>
            <person name="Jaiseng W."/>
            <person name="Kuno T."/>
        </authorList>
    </citation>
    <scope>FUNCTION</scope>
</reference>
<gene>
    <name evidence="5" type="primary">hcs1</name>
    <name type="synonym">hcs</name>
    <name type="ORF">SPAC4F8.14c</name>
</gene>
<comment type="function">
    <text evidence="4 6">Hydroxymethylglutaryl-CoA synthase; part of the first module of ergosterol biosynthesis pathway that includes the early steps of the pathway, conserved across all eukaryotes, and which results in the formation of mevalonate from acetyl-coenzyme A (acetyl-CoA) (PubMed:8750242). Hcs1 condenses acetyl-CoA with acetoacetyl-CoA to form hydroxymethylglutaryl-CoA (HMG-CoA) (PubMed:8750242). The first module starts with the action of the cytosolic acetyl-CoA acetyltransferase eg10 that catalyzes the formation of acetoacetyl-CoA. The hydroxymethylglutaryl-CoA synthases erg13 then condenses acetyl-CoA with acetoacetyl-CoA to form HMG-CoA. The rate-limiting step of the early module is the reduction to mevalonate by the 3-hydroxy-3-methylglutaryl-coenzyme A (HMG-CoA) reductases hcs1 (Probable).</text>
</comment>
<comment type="catalytic activity">
    <reaction evidence="2 7">
        <text>acetoacetyl-CoA + acetyl-CoA + H2O = (3S)-3-hydroxy-3-methylglutaryl-CoA + CoA + H(+)</text>
        <dbReference type="Rhea" id="RHEA:10188"/>
        <dbReference type="ChEBI" id="CHEBI:15377"/>
        <dbReference type="ChEBI" id="CHEBI:15378"/>
        <dbReference type="ChEBI" id="CHEBI:43074"/>
        <dbReference type="ChEBI" id="CHEBI:57286"/>
        <dbReference type="ChEBI" id="CHEBI:57287"/>
        <dbReference type="ChEBI" id="CHEBI:57288"/>
        <dbReference type="EC" id="2.3.3.10"/>
    </reaction>
    <physiologicalReaction direction="left-to-right" evidence="7">
        <dbReference type="Rhea" id="RHEA:10189"/>
    </physiologicalReaction>
</comment>
<comment type="pathway">
    <text evidence="4">Metabolic intermediate biosynthesis; (R)-mevalonate biosynthesis; (R)-mevalonate from acetyl-CoA: step 2/3.</text>
</comment>
<comment type="disruption phenotype">
    <text evidence="4">Impairs growth in absence of mevalonate.</text>
</comment>
<comment type="similarity">
    <text evidence="6">Belongs to the thiolase-like superfamily. HMG-CoA synthase family.</text>
</comment>
<proteinExistence type="evidence at protein level"/>
<organism>
    <name type="scientific">Schizosaccharomyces pombe (strain 972 / ATCC 24843)</name>
    <name type="common">Fission yeast</name>
    <dbReference type="NCBI Taxonomy" id="284812"/>
    <lineage>
        <taxon>Eukaryota</taxon>
        <taxon>Fungi</taxon>
        <taxon>Dikarya</taxon>
        <taxon>Ascomycota</taxon>
        <taxon>Taphrinomycotina</taxon>
        <taxon>Schizosaccharomycetes</taxon>
        <taxon>Schizosaccharomycetales</taxon>
        <taxon>Schizosaccharomycetaceae</taxon>
        <taxon>Schizosaccharomyces</taxon>
    </lineage>
</organism>
<sequence length="447" mass="49239">MSFDRKDIGIKGLVLYTPNQYVEQAALEAHDGVSTGKYTIGLGLTKMAFVDDREDIYSFGLTALSQLIKRYQIDISKIGRLEVGTETIIDKSKSVKSVLMQLFGDNHNVEGIDCVNACYGGVNALFNTIDWIESSAWDGRDGIVVAGDIALYAKGNARPTGGAGCVALLVGPNAPIVFEPGLRGTYMQHAYDFYKPDLTSEYPYVDGHFSLECYVKALDGAYANYNVRDVAKNGKSQGLGLDRFDYCIFHAPTCKQVQKAYARLLYTDSAAEPSNPELEGVRELLSTLDAKKSLTDKALEKGLMAITKERFNKRVSPSVYAPTNCGNMYTASIFSCLTALLSRVPADELKGKRVGAYSYGSGLAASFFSFVVKGDVSEIAKKTNLVNDLDNRHCLTPTQYEEAIELRHQAHLKKNFTPKGSIERLRSGTYYLTGIDDMFRRSYSVKP</sequence>
<evidence type="ECO:0000250" key="1">
    <source>
        <dbReference type="UniProtKB" id="P54868"/>
    </source>
</evidence>
<evidence type="ECO:0000255" key="2">
    <source>
        <dbReference type="PROSITE-ProRule" id="PRU10116"/>
    </source>
</evidence>
<evidence type="ECO:0000269" key="3">
    <source>
    </source>
</evidence>
<evidence type="ECO:0000269" key="4">
    <source>
    </source>
</evidence>
<evidence type="ECO:0000303" key="5">
    <source>
    </source>
</evidence>
<evidence type="ECO:0000305" key="6"/>
<evidence type="ECO:0000305" key="7">
    <source>
    </source>
</evidence>
<protein>
    <recommendedName>
        <fullName evidence="5">Hydroxymethylglutaryl-CoA synthase</fullName>
        <shortName evidence="5">HMG-CoA synthase</shortName>
        <ecNumber evidence="7">2.3.3.10</ecNumber>
    </recommendedName>
    <alternativeName>
        <fullName evidence="5">3-hydroxy-3-methylglutaryl coenzyme A synthase</fullName>
    </alternativeName>
</protein>
<name>ERG13_SCHPO</name>
<feature type="chain" id="PRO_0000213757" description="Hydroxymethylglutaryl-CoA synthase">
    <location>
        <begin position="1"/>
        <end position="447"/>
    </location>
</feature>
<feature type="active site" description="Proton donor/acceptor" evidence="2">
    <location>
        <position position="86"/>
    </location>
</feature>
<feature type="active site" description="Acyl-thioester intermediate" evidence="2">
    <location>
        <position position="118"/>
    </location>
</feature>
<feature type="active site" description="Proton donor/acceptor" evidence="2">
    <location>
        <position position="250"/>
    </location>
</feature>
<feature type="binding site" evidence="1">
    <location>
        <position position="118"/>
    </location>
    <ligand>
        <name>(3S)-3-hydroxy-3-methylglutaryl-CoA</name>
        <dbReference type="ChEBI" id="CHEBI:43074"/>
    </ligand>
</feature>
<feature type="binding site" evidence="1">
    <location>
        <position position="156"/>
    </location>
    <ligand>
        <name>(3S)-3-hydroxy-3-methylglutaryl-CoA</name>
        <dbReference type="ChEBI" id="CHEBI:43074"/>
    </ligand>
</feature>
<feature type="binding site" evidence="1">
    <location>
        <position position="160"/>
    </location>
    <ligand>
        <name>(3S)-3-hydroxy-3-methylglutaryl-CoA</name>
        <dbReference type="ChEBI" id="CHEBI:43074"/>
    </ligand>
</feature>
<feature type="binding site" evidence="1">
    <location>
        <position position="210"/>
    </location>
    <ligand>
        <name>(3S)-3-hydroxy-3-methylglutaryl-CoA</name>
        <dbReference type="ChEBI" id="CHEBI:43074"/>
    </ligand>
</feature>
<feature type="binding site" evidence="1">
    <location>
        <position position="250"/>
    </location>
    <ligand>
        <name>(3S)-3-hydroxy-3-methylglutaryl-CoA</name>
        <dbReference type="ChEBI" id="CHEBI:43074"/>
    </ligand>
</feature>
<feature type="binding site" evidence="1">
    <location>
        <position position="259"/>
    </location>
    <ligand>
        <name>(3S)-3-hydroxy-3-methylglutaryl-CoA</name>
        <dbReference type="ChEBI" id="CHEBI:43074"/>
    </ligand>
</feature>
<feature type="binding site" evidence="1">
    <location>
        <position position="327"/>
    </location>
    <ligand>
        <name>(3S)-3-hydroxy-3-methylglutaryl-CoA</name>
        <dbReference type="ChEBI" id="CHEBI:43074"/>
    </ligand>
</feature>
<feature type="binding site" evidence="1">
    <location>
        <position position="361"/>
    </location>
    <ligand>
        <name>(3S)-3-hydroxy-3-methylglutaryl-CoA</name>
        <dbReference type="ChEBI" id="CHEBI:43074"/>
    </ligand>
</feature>
<feature type="modified residue" description="Phosphothreonine" evidence="3">
    <location>
        <position position="398"/>
    </location>
</feature>